<dbReference type="EMBL" id="AE017125">
    <property type="protein sequence ID" value="AAP76957.1"/>
    <property type="molecule type" value="Genomic_DNA"/>
</dbReference>
<dbReference type="RefSeq" id="WP_011115203.1">
    <property type="nucleotide sequence ID" value="NC_004917.1"/>
</dbReference>
<dbReference type="SMR" id="Q7VJ83"/>
<dbReference type="STRING" id="235279.HH_0360"/>
<dbReference type="KEGG" id="hhe:HH_0360"/>
<dbReference type="eggNOG" id="COG0048">
    <property type="taxonomic scope" value="Bacteria"/>
</dbReference>
<dbReference type="HOGENOM" id="CLU_104295_1_2_7"/>
<dbReference type="OrthoDB" id="9802366at2"/>
<dbReference type="Proteomes" id="UP000002495">
    <property type="component" value="Chromosome"/>
</dbReference>
<dbReference type="GO" id="GO:0015935">
    <property type="term" value="C:small ribosomal subunit"/>
    <property type="evidence" value="ECO:0007669"/>
    <property type="project" value="InterPro"/>
</dbReference>
<dbReference type="GO" id="GO:0019843">
    <property type="term" value="F:rRNA binding"/>
    <property type="evidence" value="ECO:0007669"/>
    <property type="project" value="UniProtKB-UniRule"/>
</dbReference>
<dbReference type="GO" id="GO:0003735">
    <property type="term" value="F:structural constituent of ribosome"/>
    <property type="evidence" value="ECO:0007669"/>
    <property type="project" value="InterPro"/>
</dbReference>
<dbReference type="GO" id="GO:0000049">
    <property type="term" value="F:tRNA binding"/>
    <property type="evidence" value="ECO:0007669"/>
    <property type="project" value="UniProtKB-UniRule"/>
</dbReference>
<dbReference type="GO" id="GO:0006412">
    <property type="term" value="P:translation"/>
    <property type="evidence" value="ECO:0007669"/>
    <property type="project" value="UniProtKB-UniRule"/>
</dbReference>
<dbReference type="CDD" id="cd03368">
    <property type="entry name" value="Ribosomal_S12"/>
    <property type="match status" value="1"/>
</dbReference>
<dbReference type="FunFam" id="2.40.50.140:FF:000001">
    <property type="entry name" value="30S ribosomal protein S12"/>
    <property type="match status" value="1"/>
</dbReference>
<dbReference type="Gene3D" id="2.40.50.140">
    <property type="entry name" value="Nucleic acid-binding proteins"/>
    <property type="match status" value="1"/>
</dbReference>
<dbReference type="HAMAP" id="MF_00403_B">
    <property type="entry name" value="Ribosomal_uS12_B"/>
    <property type="match status" value="1"/>
</dbReference>
<dbReference type="InterPro" id="IPR012340">
    <property type="entry name" value="NA-bd_OB-fold"/>
</dbReference>
<dbReference type="InterPro" id="IPR006032">
    <property type="entry name" value="Ribosomal_uS12"/>
</dbReference>
<dbReference type="InterPro" id="IPR005679">
    <property type="entry name" value="Ribosomal_uS12_bac"/>
</dbReference>
<dbReference type="NCBIfam" id="TIGR00981">
    <property type="entry name" value="rpsL_bact"/>
    <property type="match status" value="1"/>
</dbReference>
<dbReference type="PANTHER" id="PTHR11652">
    <property type="entry name" value="30S RIBOSOMAL PROTEIN S12 FAMILY MEMBER"/>
    <property type="match status" value="1"/>
</dbReference>
<dbReference type="Pfam" id="PF00164">
    <property type="entry name" value="Ribosom_S12_S23"/>
    <property type="match status" value="1"/>
</dbReference>
<dbReference type="PIRSF" id="PIRSF002133">
    <property type="entry name" value="Ribosomal_S12/S23"/>
    <property type="match status" value="1"/>
</dbReference>
<dbReference type="PRINTS" id="PR01034">
    <property type="entry name" value="RIBOSOMALS12"/>
</dbReference>
<dbReference type="SUPFAM" id="SSF50249">
    <property type="entry name" value="Nucleic acid-binding proteins"/>
    <property type="match status" value="1"/>
</dbReference>
<dbReference type="PROSITE" id="PS00055">
    <property type="entry name" value="RIBOSOMAL_S12"/>
    <property type="match status" value="1"/>
</dbReference>
<sequence length="129" mass="14267">MPTINQLIRKERKKVIRKTKSPALLECPQRRGVCTRVYTTTPKKPNSALRKVAKVKLTSKVEVISYIPGEGHNLQEHSIVLVRGGRVKDLPGVKYHIIRGALDTAGVAKRNVSRSKYGAKKAKAGGDKK</sequence>
<keyword id="KW-0488">Methylation</keyword>
<keyword id="KW-1185">Reference proteome</keyword>
<keyword id="KW-0687">Ribonucleoprotein</keyword>
<keyword id="KW-0689">Ribosomal protein</keyword>
<keyword id="KW-0694">RNA-binding</keyword>
<keyword id="KW-0699">rRNA-binding</keyword>
<keyword id="KW-0820">tRNA-binding</keyword>
<protein>
    <recommendedName>
        <fullName evidence="2">Small ribosomal subunit protein uS12</fullName>
    </recommendedName>
    <alternativeName>
        <fullName evidence="3">30S ribosomal protein S12</fullName>
    </alternativeName>
</protein>
<comment type="function">
    <text evidence="2">With S4 and S5 plays an important role in translational accuracy.</text>
</comment>
<comment type="function">
    <text evidence="2">Interacts with and stabilizes bases of the 16S rRNA that are involved in tRNA selection in the A site and with the mRNA backbone. Located at the interface of the 30S and 50S subunits, it traverses the body of the 30S subunit contacting proteins on the other side and probably holding the rRNA structure together. The combined cluster of proteins S8, S12 and S17 appears to hold together the shoulder and platform of the 30S subunit.</text>
</comment>
<comment type="subunit">
    <text evidence="2">Part of the 30S ribosomal subunit. Contacts proteins S8 and S17. May interact with IF1 in the 30S initiation complex.</text>
</comment>
<comment type="similarity">
    <text evidence="2">Belongs to the universal ribosomal protein uS12 family.</text>
</comment>
<reference key="1">
    <citation type="journal article" date="2003" name="Proc. Natl. Acad. Sci. U.S.A.">
        <title>The complete genome sequence of the carcinogenic bacterium Helicobacter hepaticus.</title>
        <authorList>
            <person name="Suerbaum S."/>
            <person name="Josenhans C."/>
            <person name="Sterzenbach T."/>
            <person name="Drescher B."/>
            <person name="Brandt P."/>
            <person name="Bell M."/>
            <person name="Droege M."/>
            <person name="Fartmann B."/>
            <person name="Fischer H.-P."/>
            <person name="Ge Z."/>
            <person name="Hoerster A."/>
            <person name="Holland R."/>
            <person name="Klein K."/>
            <person name="Koenig J."/>
            <person name="Macko L."/>
            <person name="Mendz G.L."/>
            <person name="Nyakatura G."/>
            <person name="Schauer D.B."/>
            <person name="Shen Z."/>
            <person name="Weber J."/>
            <person name="Frosch M."/>
            <person name="Fox J.G."/>
        </authorList>
    </citation>
    <scope>NUCLEOTIDE SEQUENCE [LARGE SCALE GENOMIC DNA]</scope>
    <source>
        <strain>ATCC 51449 / 3B1</strain>
    </source>
</reference>
<feature type="chain" id="PRO_0000146234" description="Small ribosomal subunit protein uS12">
    <location>
        <begin position="1"/>
        <end position="129"/>
    </location>
</feature>
<feature type="modified residue" description="3-methylthioaspartic acid" evidence="1">
    <location>
        <position position="89"/>
    </location>
</feature>
<gene>
    <name evidence="2" type="primary">rpsL</name>
    <name type="ordered locus">HH_0360</name>
</gene>
<accession>Q7VJ83</accession>
<name>RS12_HELHP</name>
<proteinExistence type="inferred from homology"/>
<organism>
    <name type="scientific">Helicobacter hepaticus (strain ATCC 51449 / 3B1)</name>
    <dbReference type="NCBI Taxonomy" id="235279"/>
    <lineage>
        <taxon>Bacteria</taxon>
        <taxon>Pseudomonadati</taxon>
        <taxon>Campylobacterota</taxon>
        <taxon>Epsilonproteobacteria</taxon>
        <taxon>Campylobacterales</taxon>
        <taxon>Helicobacteraceae</taxon>
        <taxon>Helicobacter</taxon>
    </lineage>
</organism>
<evidence type="ECO:0000250" key="1"/>
<evidence type="ECO:0000255" key="2">
    <source>
        <dbReference type="HAMAP-Rule" id="MF_00403"/>
    </source>
</evidence>
<evidence type="ECO:0000305" key="3"/>